<proteinExistence type="inferred from homology"/>
<gene>
    <name type="ordered locus">MJ1558</name>
</gene>
<reference key="1">
    <citation type="journal article" date="1996" name="Science">
        <title>Complete genome sequence of the methanogenic archaeon, Methanococcus jannaschii.</title>
        <authorList>
            <person name="Bult C.J."/>
            <person name="White O."/>
            <person name="Olsen G.J."/>
            <person name="Zhou L."/>
            <person name="Fleischmann R.D."/>
            <person name="Sutton G.G."/>
            <person name="Blake J.A."/>
            <person name="FitzGerald L.M."/>
            <person name="Clayton R.A."/>
            <person name="Gocayne J.D."/>
            <person name="Kerlavage A.R."/>
            <person name="Dougherty B.A."/>
            <person name="Tomb J.-F."/>
            <person name="Adams M.D."/>
            <person name="Reich C.I."/>
            <person name="Overbeek R."/>
            <person name="Kirkness E.F."/>
            <person name="Weinstock K.G."/>
            <person name="Merrick J.M."/>
            <person name="Glodek A."/>
            <person name="Scott J.L."/>
            <person name="Geoghagen N.S.M."/>
            <person name="Weidman J.F."/>
            <person name="Fuhrmann J.L."/>
            <person name="Nguyen D."/>
            <person name="Utterback T.R."/>
            <person name="Kelley J.M."/>
            <person name="Peterson J.D."/>
            <person name="Sadow P.W."/>
            <person name="Hanna M.C."/>
            <person name="Cotton M.D."/>
            <person name="Roberts K.M."/>
            <person name="Hurst M.A."/>
            <person name="Kaine B.P."/>
            <person name="Borodovsky M."/>
            <person name="Klenk H.-P."/>
            <person name="Fraser C.M."/>
            <person name="Smith H.O."/>
            <person name="Woese C.R."/>
            <person name="Venter J.C."/>
        </authorList>
    </citation>
    <scope>NUCLEOTIDE SEQUENCE [LARGE SCALE GENOMIC DNA]</scope>
    <source>
        <strain>ATCC 43067 / DSM 2661 / JAL-1 / JCM 10045 / NBRC 100440</strain>
    </source>
</reference>
<dbReference type="EMBL" id="L77117">
    <property type="protein sequence ID" value="AAB99581.1"/>
    <property type="molecule type" value="Genomic_DNA"/>
</dbReference>
<dbReference type="PIR" id="E64494">
    <property type="entry name" value="E64494"/>
</dbReference>
<dbReference type="RefSeq" id="WP_010871082.1">
    <property type="nucleotide sequence ID" value="NC_000909.1"/>
</dbReference>
<dbReference type="SMR" id="Q58953"/>
<dbReference type="STRING" id="243232.MJ_1558"/>
<dbReference type="PaxDb" id="243232-MJ_1558"/>
<dbReference type="EnsemblBacteria" id="AAB99581">
    <property type="protein sequence ID" value="AAB99581"/>
    <property type="gene ID" value="MJ_1558"/>
</dbReference>
<dbReference type="GeneID" id="1452466"/>
<dbReference type="KEGG" id="mja:MJ_1558"/>
<dbReference type="eggNOG" id="arCOG04941">
    <property type="taxonomic scope" value="Archaea"/>
</dbReference>
<dbReference type="HOGENOM" id="CLU_155669_0_1_2"/>
<dbReference type="InParanoid" id="Q58953"/>
<dbReference type="OrthoDB" id="27277at2157"/>
<dbReference type="PhylomeDB" id="Q58953"/>
<dbReference type="Proteomes" id="UP000000805">
    <property type="component" value="Chromosome"/>
</dbReference>
<dbReference type="GO" id="GO:0005829">
    <property type="term" value="C:cytosol"/>
    <property type="evidence" value="ECO:0000318"/>
    <property type="project" value="GO_Central"/>
</dbReference>
<dbReference type="GO" id="GO:0006351">
    <property type="term" value="P:DNA-templated transcription"/>
    <property type="evidence" value="ECO:0000318"/>
    <property type="project" value="GO_Central"/>
</dbReference>
<dbReference type="CDD" id="cd04872">
    <property type="entry name" value="ACT_1ZPV"/>
    <property type="match status" value="1"/>
</dbReference>
<dbReference type="FunFam" id="3.30.70.260:FF:000032">
    <property type="entry name" value="UPF0237 protein SP_0238"/>
    <property type="match status" value="1"/>
</dbReference>
<dbReference type="Gene3D" id="3.30.70.260">
    <property type="match status" value="1"/>
</dbReference>
<dbReference type="HAMAP" id="MF_01054">
    <property type="entry name" value="UPF0237"/>
    <property type="match status" value="1"/>
</dbReference>
<dbReference type="InterPro" id="IPR045865">
    <property type="entry name" value="ACT-like_dom_sf"/>
</dbReference>
<dbReference type="InterPro" id="IPR002912">
    <property type="entry name" value="ACT_dom"/>
</dbReference>
<dbReference type="InterPro" id="IPR050990">
    <property type="entry name" value="UPF0237/GcvR_regulator"/>
</dbReference>
<dbReference type="InterPro" id="IPR022986">
    <property type="entry name" value="UPF0237_ACT"/>
</dbReference>
<dbReference type="NCBIfam" id="NF001220">
    <property type="entry name" value="PRK00194.1"/>
    <property type="match status" value="1"/>
</dbReference>
<dbReference type="PANTHER" id="PTHR34875">
    <property type="entry name" value="UPF0237 PROTEIN MJ1558"/>
    <property type="match status" value="1"/>
</dbReference>
<dbReference type="PANTHER" id="PTHR34875:SF6">
    <property type="entry name" value="UPF0237 PROTEIN MJ1558"/>
    <property type="match status" value="1"/>
</dbReference>
<dbReference type="Pfam" id="PF13740">
    <property type="entry name" value="ACT_6"/>
    <property type="match status" value="1"/>
</dbReference>
<dbReference type="SUPFAM" id="SSF55021">
    <property type="entry name" value="ACT-like"/>
    <property type="match status" value="1"/>
</dbReference>
<dbReference type="PROSITE" id="PS51671">
    <property type="entry name" value="ACT"/>
    <property type="match status" value="1"/>
</dbReference>
<feature type="chain" id="PRO_0000219910" description="UPF0237 protein MJ1558">
    <location>
        <begin position="1"/>
        <end position="90"/>
    </location>
</feature>
<feature type="domain" description="ACT" evidence="1">
    <location>
        <begin position="5"/>
        <end position="79"/>
    </location>
</feature>
<accession>Q58953</accession>
<organism>
    <name type="scientific">Methanocaldococcus jannaschii (strain ATCC 43067 / DSM 2661 / JAL-1 / JCM 10045 / NBRC 100440)</name>
    <name type="common">Methanococcus jannaschii</name>
    <dbReference type="NCBI Taxonomy" id="243232"/>
    <lineage>
        <taxon>Archaea</taxon>
        <taxon>Methanobacteriati</taxon>
        <taxon>Methanobacteriota</taxon>
        <taxon>Methanomada group</taxon>
        <taxon>Methanococci</taxon>
        <taxon>Methanococcales</taxon>
        <taxon>Methanocaldococcaceae</taxon>
        <taxon>Methanocaldococcus</taxon>
    </lineage>
</organism>
<protein>
    <recommendedName>
        <fullName evidence="1">UPF0237 protein MJ1558</fullName>
    </recommendedName>
</protein>
<name>Y1558_METJA</name>
<keyword id="KW-1185">Reference proteome</keyword>
<sequence length="90" mass="9988">MSRVVVSVIGQDRTGIVAGISKVLAENNANILDISQTIMDNLFAMIMLVDISNAKVDFATLKKELEKAGEELGVQVIVQHEDIFKYMHRI</sequence>
<evidence type="ECO:0000255" key="1">
    <source>
        <dbReference type="HAMAP-Rule" id="MF_01054"/>
    </source>
</evidence>
<comment type="similarity">
    <text evidence="1">Belongs to the UPF0237 family.</text>
</comment>